<feature type="chain" id="PRO_0000385947" description="GTPase Obg">
    <location>
        <begin position="1"/>
        <end position="428"/>
    </location>
</feature>
<feature type="domain" description="Obg" evidence="3">
    <location>
        <begin position="1"/>
        <end position="158"/>
    </location>
</feature>
<feature type="domain" description="OBG-type G" evidence="1">
    <location>
        <begin position="159"/>
        <end position="330"/>
    </location>
</feature>
<feature type="domain" description="OCT" evidence="2">
    <location>
        <begin position="349"/>
        <end position="428"/>
    </location>
</feature>
<feature type="binding site" evidence="1">
    <location>
        <begin position="165"/>
        <end position="172"/>
    </location>
    <ligand>
        <name>GTP</name>
        <dbReference type="ChEBI" id="CHEBI:37565"/>
    </ligand>
</feature>
<feature type="binding site" evidence="1">
    <location>
        <position position="172"/>
    </location>
    <ligand>
        <name>Mg(2+)</name>
        <dbReference type="ChEBI" id="CHEBI:18420"/>
    </ligand>
</feature>
<feature type="binding site" evidence="1">
    <location>
        <begin position="190"/>
        <end position="194"/>
    </location>
    <ligand>
        <name>GTP</name>
        <dbReference type="ChEBI" id="CHEBI:37565"/>
    </ligand>
</feature>
<feature type="binding site" evidence="1">
    <location>
        <position position="192"/>
    </location>
    <ligand>
        <name>Mg(2+)</name>
        <dbReference type="ChEBI" id="CHEBI:18420"/>
    </ligand>
</feature>
<feature type="binding site" evidence="1">
    <location>
        <begin position="212"/>
        <end position="215"/>
    </location>
    <ligand>
        <name>GTP</name>
        <dbReference type="ChEBI" id="CHEBI:37565"/>
    </ligand>
</feature>
<feature type="binding site" evidence="1">
    <location>
        <begin position="282"/>
        <end position="285"/>
    </location>
    <ligand>
        <name>GTP</name>
        <dbReference type="ChEBI" id="CHEBI:37565"/>
    </ligand>
</feature>
<feature type="binding site" evidence="1">
    <location>
        <begin position="311"/>
        <end position="313"/>
    </location>
    <ligand>
        <name>GTP</name>
        <dbReference type="ChEBI" id="CHEBI:37565"/>
    </ligand>
</feature>
<accession>Q8RHS8</accession>
<name>OBG_FUSNN</name>
<gene>
    <name evidence="1" type="primary">obg</name>
    <name type="ordered locus">FN1918</name>
</gene>
<keyword id="KW-0963">Cytoplasm</keyword>
<keyword id="KW-0342">GTP-binding</keyword>
<keyword id="KW-0378">Hydrolase</keyword>
<keyword id="KW-0460">Magnesium</keyword>
<keyword id="KW-0479">Metal-binding</keyword>
<keyword id="KW-0547">Nucleotide-binding</keyword>
<keyword id="KW-1185">Reference proteome</keyword>
<dbReference type="EC" id="3.6.5.-" evidence="1"/>
<dbReference type="EMBL" id="AE009951">
    <property type="protein sequence ID" value="AAL94017.1"/>
    <property type="molecule type" value="Genomic_DNA"/>
</dbReference>
<dbReference type="RefSeq" id="NP_602718.1">
    <property type="nucleotide sequence ID" value="NC_003454.1"/>
</dbReference>
<dbReference type="RefSeq" id="WP_011015918.1">
    <property type="nucleotide sequence ID" value="NZ_CP028101.1"/>
</dbReference>
<dbReference type="SMR" id="Q8RHS8"/>
<dbReference type="FunCoup" id="Q8RHS8">
    <property type="interactions" value="333"/>
</dbReference>
<dbReference type="STRING" id="190304.FN1918"/>
<dbReference type="PaxDb" id="190304-FN1918"/>
<dbReference type="EnsemblBacteria" id="AAL94017">
    <property type="protein sequence ID" value="AAL94017"/>
    <property type="gene ID" value="FN1918"/>
</dbReference>
<dbReference type="GeneID" id="79783065"/>
<dbReference type="KEGG" id="fnu:FN1918"/>
<dbReference type="PATRIC" id="fig|190304.8.peg.393"/>
<dbReference type="eggNOG" id="COG0536">
    <property type="taxonomic scope" value="Bacteria"/>
</dbReference>
<dbReference type="HOGENOM" id="CLU_011747_2_1_0"/>
<dbReference type="InParanoid" id="Q8RHS8"/>
<dbReference type="BioCyc" id="FNUC190304:G1FZS-412-MONOMER"/>
<dbReference type="Proteomes" id="UP000002521">
    <property type="component" value="Chromosome"/>
</dbReference>
<dbReference type="GO" id="GO:0005737">
    <property type="term" value="C:cytoplasm"/>
    <property type="evidence" value="ECO:0007669"/>
    <property type="project" value="UniProtKB-SubCell"/>
</dbReference>
<dbReference type="GO" id="GO:0005525">
    <property type="term" value="F:GTP binding"/>
    <property type="evidence" value="ECO:0000318"/>
    <property type="project" value="GO_Central"/>
</dbReference>
<dbReference type="GO" id="GO:0003924">
    <property type="term" value="F:GTPase activity"/>
    <property type="evidence" value="ECO:0000318"/>
    <property type="project" value="GO_Central"/>
</dbReference>
<dbReference type="GO" id="GO:0000287">
    <property type="term" value="F:magnesium ion binding"/>
    <property type="evidence" value="ECO:0007669"/>
    <property type="project" value="InterPro"/>
</dbReference>
<dbReference type="GO" id="GO:0042254">
    <property type="term" value="P:ribosome biogenesis"/>
    <property type="evidence" value="ECO:0007669"/>
    <property type="project" value="UniProtKB-UniRule"/>
</dbReference>
<dbReference type="CDD" id="cd01898">
    <property type="entry name" value="Obg"/>
    <property type="match status" value="1"/>
</dbReference>
<dbReference type="FunFam" id="2.70.210.12:FF:000001">
    <property type="entry name" value="GTPase Obg"/>
    <property type="match status" value="1"/>
</dbReference>
<dbReference type="Gene3D" id="3.30.300.350">
    <property type="entry name" value="GTP-binding protein OBG, C-terminal domain"/>
    <property type="match status" value="1"/>
</dbReference>
<dbReference type="Gene3D" id="2.70.210.12">
    <property type="entry name" value="GTP1/OBG domain"/>
    <property type="match status" value="1"/>
</dbReference>
<dbReference type="Gene3D" id="3.40.50.300">
    <property type="entry name" value="P-loop containing nucleotide triphosphate hydrolases"/>
    <property type="match status" value="1"/>
</dbReference>
<dbReference type="HAMAP" id="MF_01454">
    <property type="entry name" value="GTPase_Obg"/>
    <property type="match status" value="1"/>
</dbReference>
<dbReference type="InterPro" id="IPR031167">
    <property type="entry name" value="G_OBG"/>
</dbReference>
<dbReference type="InterPro" id="IPR006073">
    <property type="entry name" value="GTP-bd"/>
</dbReference>
<dbReference type="InterPro" id="IPR014100">
    <property type="entry name" value="GTP-bd_Obg/CgtA"/>
</dbReference>
<dbReference type="InterPro" id="IPR036346">
    <property type="entry name" value="GTP-bd_prot_GTP1/OBG_C_sf"/>
</dbReference>
<dbReference type="InterPro" id="IPR006074">
    <property type="entry name" value="GTP1-OBG_CS"/>
</dbReference>
<dbReference type="InterPro" id="IPR006169">
    <property type="entry name" value="GTP1_OBG_dom"/>
</dbReference>
<dbReference type="InterPro" id="IPR036726">
    <property type="entry name" value="GTP1_OBG_dom_sf"/>
</dbReference>
<dbReference type="InterPro" id="IPR045086">
    <property type="entry name" value="OBG_GTPase"/>
</dbReference>
<dbReference type="InterPro" id="IPR015349">
    <property type="entry name" value="OCT_dom"/>
</dbReference>
<dbReference type="InterPro" id="IPR027417">
    <property type="entry name" value="P-loop_NTPase"/>
</dbReference>
<dbReference type="NCBIfam" id="TIGR02729">
    <property type="entry name" value="Obg_CgtA"/>
    <property type="match status" value="1"/>
</dbReference>
<dbReference type="NCBIfam" id="TIGR03595">
    <property type="entry name" value="Obg_CgtA_exten"/>
    <property type="match status" value="1"/>
</dbReference>
<dbReference type="NCBIfam" id="NF008954">
    <property type="entry name" value="PRK12296.1"/>
    <property type="match status" value="1"/>
</dbReference>
<dbReference type="NCBIfam" id="NF008955">
    <property type="entry name" value="PRK12297.1"/>
    <property type="match status" value="1"/>
</dbReference>
<dbReference type="NCBIfam" id="NF008956">
    <property type="entry name" value="PRK12299.1"/>
    <property type="match status" value="1"/>
</dbReference>
<dbReference type="PANTHER" id="PTHR11702">
    <property type="entry name" value="DEVELOPMENTALLY REGULATED GTP-BINDING PROTEIN-RELATED"/>
    <property type="match status" value="1"/>
</dbReference>
<dbReference type="PANTHER" id="PTHR11702:SF31">
    <property type="entry name" value="MITOCHONDRIAL RIBOSOME-ASSOCIATED GTPASE 2"/>
    <property type="match status" value="1"/>
</dbReference>
<dbReference type="Pfam" id="PF09269">
    <property type="entry name" value="DUF1967"/>
    <property type="match status" value="1"/>
</dbReference>
<dbReference type="Pfam" id="PF01018">
    <property type="entry name" value="GTP1_OBG"/>
    <property type="match status" value="1"/>
</dbReference>
<dbReference type="Pfam" id="PF01926">
    <property type="entry name" value="MMR_HSR1"/>
    <property type="match status" value="1"/>
</dbReference>
<dbReference type="PIRSF" id="PIRSF002401">
    <property type="entry name" value="GTP_bd_Obg/CgtA"/>
    <property type="match status" value="1"/>
</dbReference>
<dbReference type="PRINTS" id="PR00326">
    <property type="entry name" value="GTP1OBG"/>
</dbReference>
<dbReference type="SUPFAM" id="SSF102741">
    <property type="entry name" value="Obg GTP-binding protein C-terminal domain"/>
    <property type="match status" value="1"/>
</dbReference>
<dbReference type="SUPFAM" id="SSF82051">
    <property type="entry name" value="Obg GTP-binding protein N-terminal domain"/>
    <property type="match status" value="1"/>
</dbReference>
<dbReference type="SUPFAM" id="SSF52540">
    <property type="entry name" value="P-loop containing nucleoside triphosphate hydrolases"/>
    <property type="match status" value="1"/>
</dbReference>
<dbReference type="PROSITE" id="PS51710">
    <property type="entry name" value="G_OBG"/>
    <property type="match status" value="1"/>
</dbReference>
<dbReference type="PROSITE" id="PS00905">
    <property type="entry name" value="GTP1_OBG"/>
    <property type="match status" value="1"/>
</dbReference>
<dbReference type="PROSITE" id="PS51883">
    <property type="entry name" value="OBG"/>
    <property type="match status" value="1"/>
</dbReference>
<dbReference type="PROSITE" id="PS51881">
    <property type="entry name" value="OCT"/>
    <property type="match status" value="1"/>
</dbReference>
<evidence type="ECO:0000255" key="1">
    <source>
        <dbReference type="HAMAP-Rule" id="MF_01454"/>
    </source>
</evidence>
<evidence type="ECO:0000255" key="2">
    <source>
        <dbReference type="PROSITE-ProRule" id="PRU01229"/>
    </source>
</evidence>
<evidence type="ECO:0000255" key="3">
    <source>
        <dbReference type="PROSITE-ProRule" id="PRU01231"/>
    </source>
</evidence>
<proteinExistence type="inferred from homology"/>
<reference key="1">
    <citation type="journal article" date="2002" name="J. Bacteriol.">
        <title>Genome sequence and analysis of the oral bacterium Fusobacterium nucleatum strain ATCC 25586.</title>
        <authorList>
            <person name="Kapatral V."/>
            <person name="Anderson I."/>
            <person name="Ivanova N."/>
            <person name="Reznik G."/>
            <person name="Los T."/>
            <person name="Lykidis A."/>
            <person name="Bhattacharyya A."/>
            <person name="Bartman A."/>
            <person name="Gardner W."/>
            <person name="Grechkin G."/>
            <person name="Zhu L."/>
            <person name="Vasieva O."/>
            <person name="Chu L."/>
            <person name="Kogan Y."/>
            <person name="Chaga O."/>
            <person name="Goltsman E."/>
            <person name="Bernal A."/>
            <person name="Larsen N."/>
            <person name="D'Souza M."/>
            <person name="Walunas T."/>
            <person name="Pusch G."/>
            <person name="Haselkorn R."/>
            <person name="Fonstein M."/>
            <person name="Kyrpides N.C."/>
            <person name="Overbeek R."/>
        </authorList>
    </citation>
    <scope>NUCLEOTIDE SEQUENCE [LARGE SCALE GENOMIC DNA]</scope>
    <source>
        <strain>ATCC 25586 / DSM 15643 / BCRC 10681 / CIP 101130 / JCM 8532 / KCTC 2640 / LMG 13131 / VPI 4355</strain>
    </source>
</reference>
<organism>
    <name type="scientific">Fusobacterium nucleatum subsp. nucleatum (strain ATCC 25586 / DSM 15643 / BCRC 10681 / CIP 101130 / JCM 8532 / KCTC 2640 / LMG 13131 / VPI 4355)</name>
    <dbReference type="NCBI Taxonomy" id="190304"/>
    <lineage>
        <taxon>Bacteria</taxon>
        <taxon>Fusobacteriati</taxon>
        <taxon>Fusobacteriota</taxon>
        <taxon>Fusobacteriia</taxon>
        <taxon>Fusobacteriales</taxon>
        <taxon>Fusobacteriaceae</taxon>
        <taxon>Fusobacterium</taxon>
    </lineage>
</organism>
<sequence>MFIDEVIITVKAGNGGDGSAAFRREKFVQFGGPDGGDGGKGGDVIFVADSNINTLIDFKFKKLFKAQNGENGQKKQMYGKKGEDLIIKVPVGTQVRDFTTGKLILDMSVNGEQRVLLKGGKGGYGNVHFKNSIRKAPKIAEKGGEGAEIKVKLELKLLADVALVGYPSVGKSSFINKVSAANSKVGSYHFTTLEPKLGVVRLEEGKSFVIADIPGLIEGAHEGVGLGDKFLKHIERCKMIYHIVDVAEIEGRDCIEDFEKINHELKKFSEKLAGKKQIVIANKMDLIWDMEKFEKFKSYLAEKGIEIYPVSVLLNEGLKEILYKTYDMLSRIEREPLEEETDITKLLKELKIEKEDFEIIRDEEDAIVVGGRIVDDVLAKYVIGMDDESLVTFLHMMRSLGMEEALQEFGVQDGDTVKIADVEFEYFE</sequence>
<protein>
    <recommendedName>
        <fullName evidence="1">GTPase Obg</fullName>
        <ecNumber evidence="1">3.6.5.-</ecNumber>
    </recommendedName>
    <alternativeName>
        <fullName evidence="1">GTP-binding protein Obg</fullName>
    </alternativeName>
</protein>
<comment type="function">
    <text evidence="1">An essential GTPase which binds GTP, GDP and possibly (p)ppGpp with moderate affinity, with high nucleotide exchange rates and a fairly low GTP hydrolysis rate. Plays a role in control of the cell cycle, stress response, ribosome biogenesis and in those bacteria that undergo differentiation, in morphogenesis control.</text>
</comment>
<comment type="cofactor">
    <cofactor evidence="1">
        <name>Mg(2+)</name>
        <dbReference type="ChEBI" id="CHEBI:18420"/>
    </cofactor>
</comment>
<comment type="subunit">
    <text evidence="1">Monomer.</text>
</comment>
<comment type="subcellular location">
    <subcellularLocation>
        <location evidence="1">Cytoplasm</location>
    </subcellularLocation>
</comment>
<comment type="similarity">
    <text evidence="1">Belongs to the TRAFAC class OBG-HflX-like GTPase superfamily. OBG GTPase family.</text>
</comment>